<gene>
    <name evidence="1" type="primary">rpsM</name>
    <name type="ordered locus">Plav_2758</name>
</gene>
<keyword id="KW-1185">Reference proteome</keyword>
<keyword id="KW-0687">Ribonucleoprotein</keyword>
<keyword id="KW-0689">Ribosomal protein</keyword>
<keyword id="KW-0694">RNA-binding</keyword>
<keyword id="KW-0699">rRNA-binding</keyword>
<keyword id="KW-0820">tRNA-binding</keyword>
<feature type="chain" id="PRO_1000073212" description="Small ribosomal subunit protein uS13">
    <location>
        <begin position="1"/>
        <end position="122"/>
    </location>
</feature>
<feature type="region of interest" description="Disordered" evidence="2">
    <location>
        <begin position="99"/>
        <end position="122"/>
    </location>
</feature>
<dbReference type="EMBL" id="CP000774">
    <property type="protein sequence ID" value="ABS64366.1"/>
    <property type="molecule type" value="Genomic_DNA"/>
</dbReference>
<dbReference type="RefSeq" id="WP_012111680.1">
    <property type="nucleotide sequence ID" value="NC_009719.1"/>
</dbReference>
<dbReference type="SMR" id="A7HWT3"/>
<dbReference type="STRING" id="402881.Plav_2758"/>
<dbReference type="KEGG" id="pla:Plav_2758"/>
<dbReference type="eggNOG" id="COG0099">
    <property type="taxonomic scope" value="Bacteria"/>
</dbReference>
<dbReference type="HOGENOM" id="CLU_103849_1_2_5"/>
<dbReference type="OrthoDB" id="9803610at2"/>
<dbReference type="Proteomes" id="UP000006377">
    <property type="component" value="Chromosome"/>
</dbReference>
<dbReference type="GO" id="GO:0005829">
    <property type="term" value="C:cytosol"/>
    <property type="evidence" value="ECO:0007669"/>
    <property type="project" value="TreeGrafter"/>
</dbReference>
<dbReference type="GO" id="GO:0015935">
    <property type="term" value="C:small ribosomal subunit"/>
    <property type="evidence" value="ECO:0007669"/>
    <property type="project" value="TreeGrafter"/>
</dbReference>
<dbReference type="GO" id="GO:0019843">
    <property type="term" value="F:rRNA binding"/>
    <property type="evidence" value="ECO:0007669"/>
    <property type="project" value="UniProtKB-UniRule"/>
</dbReference>
<dbReference type="GO" id="GO:0003735">
    <property type="term" value="F:structural constituent of ribosome"/>
    <property type="evidence" value="ECO:0007669"/>
    <property type="project" value="InterPro"/>
</dbReference>
<dbReference type="GO" id="GO:0000049">
    <property type="term" value="F:tRNA binding"/>
    <property type="evidence" value="ECO:0007669"/>
    <property type="project" value="UniProtKB-UniRule"/>
</dbReference>
<dbReference type="GO" id="GO:0006412">
    <property type="term" value="P:translation"/>
    <property type="evidence" value="ECO:0007669"/>
    <property type="project" value="UniProtKB-UniRule"/>
</dbReference>
<dbReference type="FunFam" id="1.10.8.50:FF:000001">
    <property type="entry name" value="30S ribosomal protein S13"/>
    <property type="match status" value="1"/>
</dbReference>
<dbReference type="FunFam" id="4.10.910.10:FF:000001">
    <property type="entry name" value="30S ribosomal protein S13"/>
    <property type="match status" value="1"/>
</dbReference>
<dbReference type="Gene3D" id="1.10.8.50">
    <property type="match status" value="1"/>
</dbReference>
<dbReference type="Gene3D" id="4.10.910.10">
    <property type="entry name" value="30s ribosomal protein s13, domain 2"/>
    <property type="match status" value="1"/>
</dbReference>
<dbReference type="HAMAP" id="MF_01315">
    <property type="entry name" value="Ribosomal_uS13"/>
    <property type="match status" value="1"/>
</dbReference>
<dbReference type="InterPro" id="IPR027437">
    <property type="entry name" value="Rbsml_uS13_C"/>
</dbReference>
<dbReference type="InterPro" id="IPR001892">
    <property type="entry name" value="Ribosomal_uS13"/>
</dbReference>
<dbReference type="InterPro" id="IPR010979">
    <property type="entry name" value="Ribosomal_uS13-like_H2TH"/>
</dbReference>
<dbReference type="InterPro" id="IPR019980">
    <property type="entry name" value="Ribosomal_uS13_bac-type"/>
</dbReference>
<dbReference type="InterPro" id="IPR018269">
    <property type="entry name" value="Ribosomal_uS13_CS"/>
</dbReference>
<dbReference type="NCBIfam" id="TIGR03631">
    <property type="entry name" value="uS13_bact"/>
    <property type="match status" value="1"/>
</dbReference>
<dbReference type="PANTHER" id="PTHR10871">
    <property type="entry name" value="30S RIBOSOMAL PROTEIN S13/40S RIBOSOMAL PROTEIN S18"/>
    <property type="match status" value="1"/>
</dbReference>
<dbReference type="PANTHER" id="PTHR10871:SF1">
    <property type="entry name" value="SMALL RIBOSOMAL SUBUNIT PROTEIN US13M"/>
    <property type="match status" value="1"/>
</dbReference>
<dbReference type="Pfam" id="PF00416">
    <property type="entry name" value="Ribosomal_S13"/>
    <property type="match status" value="1"/>
</dbReference>
<dbReference type="PIRSF" id="PIRSF002134">
    <property type="entry name" value="Ribosomal_S13"/>
    <property type="match status" value="1"/>
</dbReference>
<dbReference type="SUPFAM" id="SSF46946">
    <property type="entry name" value="S13-like H2TH domain"/>
    <property type="match status" value="1"/>
</dbReference>
<dbReference type="PROSITE" id="PS00646">
    <property type="entry name" value="RIBOSOMAL_S13_1"/>
    <property type="match status" value="1"/>
</dbReference>
<dbReference type="PROSITE" id="PS50159">
    <property type="entry name" value="RIBOSOMAL_S13_2"/>
    <property type="match status" value="1"/>
</dbReference>
<accession>A7HWT3</accession>
<sequence length="122" mass="13626">MARIAGVNIPTNKRVVIALTYIHGIGNTKAKEICGTVGIPAERRVNELTDAEVIQIREAIDRDYLVEGDLRREVSMNIKRLMDLGCYRGLRHRKGLPVRGQRTHTNARTRKGPAKAIAGKKK</sequence>
<name>RS13_PARL1</name>
<reference key="1">
    <citation type="journal article" date="2011" name="Stand. Genomic Sci.">
        <title>Complete genome sequence of Parvibaculum lavamentivorans type strain (DS-1(T)).</title>
        <authorList>
            <person name="Schleheck D."/>
            <person name="Weiss M."/>
            <person name="Pitluck S."/>
            <person name="Bruce D."/>
            <person name="Land M.L."/>
            <person name="Han S."/>
            <person name="Saunders E."/>
            <person name="Tapia R."/>
            <person name="Detter C."/>
            <person name="Brettin T."/>
            <person name="Han J."/>
            <person name="Woyke T."/>
            <person name="Goodwin L."/>
            <person name="Pennacchio L."/>
            <person name="Nolan M."/>
            <person name="Cook A.M."/>
            <person name="Kjelleberg S."/>
            <person name="Thomas T."/>
        </authorList>
    </citation>
    <scope>NUCLEOTIDE SEQUENCE [LARGE SCALE GENOMIC DNA]</scope>
    <source>
        <strain>DS-1 / DSM 13023 / NCIMB 13966</strain>
    </source>
</reference>
<evidence type="ECO:0000255" key="1">
    <source>
        <dbReference type="HAMAP-Rule" id="MF_01315"/>
    </source>
</evidence>
<evidence type="ECO:0000256" key="2">
    <source>
        <dbReference type="SAM" id="MobiDB-lite"/>
    </source>
</evidence>
<evidence type="ECO:0000305" key="3"/>
<organism>
    <name type="scientific">Parvibaculum lavamentivorans (strain DS-1 / DSM 13023 / NCIMB 13966)</name>
    <dbReference type="NCBI Taxonomy" id="402881"/>
    <lineage>
        <taxon>Bacteria</taxon>
        <taxon>Pseudomonadati</taxon>
        <taxon>Pseudomonadota</taxon>
        <taxon>Alphaproteobacteria</taxon>
        <taxon>Hyphomicrobiales</taxon>
        <taxon>Parvibaculaceae</taxon>
        <taxon>Parvibaculum</taxon>
    </lineage>
</organism>
<proteinExistence type="inferred from homology"/>
<protein>
    <recommendedName>
        <fullName evidence="1">Small ribosomal subunit protein uS13</fullName>
    </recommendedName>
    <alternativeName>
        <fullName evidence="3">30S ribosomal protein S13</fullName>
    </alternativeName>
</protein>
<comment type="function">
    <text evidence="1">Located at the top of the head of the 30S subunit, it contacts several helices of the 16S rRNA. In the 70S ribosome it contacts the 23S rRNA (bridge B1a) and protein L5 of the 50S subunit (bridge B1b), connecting the 2 subunits; these bridges are implicated in subunit movement. Contacts the tRNAs in the A and P-sites.</text>
</comment>
<comment type="subunit">
    <text evidence="1">Part of the 30S ribosomal subunit. Forms a loose heterodimer with protein S19. Forms two bridges to the 50S subunit in the 70S ribosome.</text>
</comment>
<comment type="similarity">
    <text evidence="1">Belongs to the universal ribosomal protein uS13 family.</text>
</comment>